<accession>B0KBF5</accession>
<keyword id="KW-0012">Acyltransferase</keyword>
<keyword id="KW-0133">Cell shape</keyword>
<keyword id="KW-0961">Cell wall biogenesis/degradation</keyword>
<keyword id="KW-0963">Cytoplasm</keyword>
<keyword id="KW-0460">Magnesium</keyword>
<keyword id="KW-0479">Metal-binding</keyword>
<keyword id="KW-0511">Multifunctional enzyme</keyword>
<keyword id="KW-0548">Nucleotidyltransferase</keyword>
<keyword id="KW-0573">Peptidoglycan synthesis</keyword>
<keyword id="KW-1185">Reference proteome</keyword>
<keyword id="KW-0677">Repeat</keyword>
<keyword id="KW-0808">Transferase</keyword>
<feature type="chain" id="PRO_1000186505" description="Bifunctional protein GlmU">
    <location>
        <begin position="1"/>
        <end position="457"/>
    </location>
</feature>
<feature type="region of interest" description="Pyrophosphorylase" evidence="1">
    <location>
        <begin position="1"/>
        <end position="228"/>
    </location>
</feature>
<feature type="region of interest" description="Linker" evidence="1">
    <location>
        <begin position="229"/>
        <end position="249"/>
    </location>
</feature>
<feature type="region of interest" description="N-acetyltransferase" evidence="1">
    <location>
        <begin position="250"/>
        <end position="457"/>
    </location>
</feature>
<feature type="active site" description="Proton acceptor" evidence="1">
    <location>
        <position position="361"/>
    </location>
</feature>
<feature type="binding site" evidence="1">
    <location>
        <begin position="9"/>
        <end position="12"/>
    </location>
    <ligand>
        <name>UDP-N-acetyl-alpha-D-glucosamine</name>
        <dbReference type="ChEBI" id="CHEBI:57705"/>
    </ligand>
</feature>
<feature type="binding site" evidence="1">
    <location>
        <position position="23"/>
    </location>
    <ligand>
        <name>UDP-N-acetyl-alpha-D-glucosamine</name>
        <dbReference type="ChEBI" id="CHEBI:57705"/>
    </ligand>
</feature>
<feature type="binding site" evidence="1">
    <location>
        <position position="73"/>
    </location>
    <ligand>
        <name>UDP-N-acetyl-alpha-D-glucosamine</name>
        <dbReference type="ChEBI" id="CHEBI:57705"/>
    </ligand>
</feature>
<feature type="binding site" evidence="1">
    <location>
        <begin position="78"/>
        <end position="79"/>
    </location>
    <ligand>
        <name>UDP-N-acetyl-alpha-D-glucosamine</name>
        <dbReference type="ChEBI" id="CHEBI:57705"/>
    </ligand>
</feature>
<feature type="binding site" evidence="1">
    <location>
        <position position="102"/>
    </location>
    <ligand>
        <name>Mg(2+)</name>
        <dbReference type="ChEBI" id="CHEBI:18420"/>
    </ligand>
</feature>
<feature type="binding site" evidence="1">
    <location>
        <position position="139"/>
    </location>
    <ligand>
        <name>UDP-N-acetyl-alpha-D-glucosamine</name>
        <dbReference type="ChEBI" id="CHEBI:57705"/>
    </ligand>
</feature>
<feature type="binding site" evidence="1">
    <location>
        <position position="154"/>
    </location>
    <ligand>
        <name>UDP-N-acetyl-alpha-D-glucosamine</name>
        <dbReference type="ChEBI" id="CHEBI:57705"/>
    </ligand>
</feature>
<feature type="binding site" evidence="1">
    <location>
        <position position="169"/>
    </location>
    <ligand>
        <name>UDP-N-acetyl-alpha-D-glucosamine</name>
        <dbReference type="ChEBI" id="CHEBI:57705"/>
    </ligand>
</feature>
<feature type="binding site" evidence="1">
    <location>
        <position position="226"/>
    </location>
    <ligand>
        <name>Mg(2+)</name>
        <dbReference type="ChEBI" id="CHEBI:18420"/>
    </ligand>
</feature>
<feature type="binding site" evidence="1">
    <location>
        <position position="226"/>
    </location>
    <ligand>
        <name>UDP-N-acetyl-alpha-D-glucosamine</name>
        <dbReference type="ChEBI" id="CHEBI:57705"/>
    </ligand>
</feature>
<feature type="binding site" evidence="1">
    <location>
        <position position="331"/>
    </location>
    <ligand>
        <name>UDP-N-acetyl-alpha-D-glucosamine</name>
        <dbReference type="ChEBI" id="CHEBI:57705"/>
    </ligand>
</feature>
<feature type="binding site" evidence="1">
    <location>
        <position position="349"/>
    </location>
    <ligand>
        <name>UDP-N-acetyl-alpha-D-glucosamine</name>
        <dbReference type="ChEBI" id="CHEBI:57705"/>
    </ligand>
</feature>
<feature type="binding site" evidence="1">
    <location>
        <position position="364"/>
    </location>
    <ligand>
        <name>UDP-N-acetyl-alpha-D-glucosamine</name>
        <dbReference type="ChEBI" id="CHEBI:57705"/>
    </ligand>
</feature>
<feature type="binding site" evidence="1">
    <location>
        <position position="375"/>
    </location>
    <ligand>
        <name>UDP-N-acetyl-alpha-D-glucosamine</name>
        <dbReference type="ChEBI" id="CHEBI:57705"/>
    </ligand>
</feature>
<feature type="binding site" evidence="1">
    <location>
        <begin position="384"/>
        <end position="385"/>
    </location>
    <ligand>
        <name>acetyl-CoA</name>
        <dbReference type="ChEBI" id="CHEBI:57288"/>
    </ligand>
</feature>
<feature type="binding site" evidence="1">
    <location>
        <position position="421"/>
    </location>
    <ligand>
        <name>acetyl-CoA</name>
        <dbReference type="ChEBI" id="CHEBI:57288"/>
    </ligand>
</feature>
<feature type="binding site" evidence="1">
    <location>
        <position position="438"/>
    </location>
    <ligand>
        <name>acetyl-CoA</name>
        <dbReference type="ChEBI" id="CHEBI:57288"/>
    </ligand>
</feature>
<reference key="1">
    <citation type="submission" date="2008-01" db="EMBL/GenBank/DDBJ databases">
        <title>Complete sequence of Thermoanaerobacter pseudethanolicus 39E.</title>
        <authorList>
            <person name="Copeland A."/>
            <person name="Lucas S."/>
            <person name="Lapidus A."/>
            <person name="Barry K."/>
            <person name="Glavina del Rio T."/>
            <person name="Dalin E."/>
            <person name="Tice H."/>
            <person name="Pitluck S."/>
            <person name="Bruce D."/>
            <person name="Goodwin L."/>
            <person name="Saunders E."/>
            <person name="Brettin T."/>
            <person name="Detter J.C."/>
            <person name="Han C."/>
            <person name="Schmutz J."/>
            <person name="Larimer F."/>
            <person name="Land M."/>
            <person name="Hauser L."/>
            <person name="Kyrpides N."/>
            <person name="Lykidis A."/>
            <person name="Hemme C."/>
            <person name="Fields M.W."/>
            <person name="He Z."/>
            <person name="Zhou J."/>
            <person name="Richardson P."/>
        </authorList>
    </citation>
    <scope>NUCLEOTIDE SEQUENCE [LARGE SCALE GENOMIC DNA]</scope>
    <source>
        <strain>ATCC 33223 / DSM 2355 / 39E</strain>
    </source>
</reference>
<dbReference type="EC" id="2.7.7.23" evidence="1"/>
<dbReference type="EC" id="2.3.1.157" evidence="1"/>
<dbReference type="EMBL" id="CP000924">
    <property type="protein sequence ID" value="ABY93834.1"/>
    <property type="molecule type" value="Genomic_DNA"/>
</dbReference>
<dbReference type="RefSeq" id="WP_004399028.1">
    <property type="nucleotide sequence ID" value="NC_010321.1"/>
</dbReference>
<dbReference type="SMR" id="B0KBF5"/>
<dbReference type="STRING" id="340099.Teth39_0161"/>
<dbReference type="KEGG" id="tpd:Teth39_0161"/>
<dbReference type="eggNOG" id="COG1207">
    <property type="taxonomic scope" value="Bacteria"/>
</dbReference>
<dbReference type="HOGENOM" id="CLU_029499_15_2_9"/>
<dbReference type="UniPathway" id="UPA00113">
    <property type="reaction ID" value="UER00532"/>
</dbReference>
<dbReference type="UniPathway" id="UPA00113">
    <property type="reaction ID" value="UER00533"/>
</dbReference>
<dbReference type="UniPathway" id="UPA00973"/>
<dbReference type="Proteomes" id="UP000002156">
    <property type="component" value="Chromosome"/>
</dbReference>
<dbReference type="GO" id="GO:0005737">
    <property type="term" value="C:cytoplasm"/>
    <property type="evidence" value="ECO:0007669"/>
    <property type="project" value="UniProtKB-SubCell"/>
</dbReference>
<dbReference type="GO" id="GO:0016020">
    <property type="term" value="C:membrane"/>
    <property type="evidence" value="ECO:0007669"/>
    <property type="project" value="GOC"/>
</dbReference>
<dbReference type="GO" id="GO:0019134">
    <property type="term" value="F:glucosamine-1-phosphate N-acetyltransferase activity"/>
    <property type="evidence" value="ECO:0007669"/>
    <property type="project" value="UniProtKB-UniRule"/>
</dbReference>
<dbReference type="GO" id="GO:0000287">
    <property type="term" value="F:magnesium ion binding"/>
    <property type="evidence" value="ECO:0007669"/>
    <property type="project" value="UniProtKB-UniRule"/>
</dbReference>
<dbReference type="GO" id="GO:0003977">
    <property type="term" value="F:UDP-N-acetylglucosamine diphosphorylase activity"/>
    <property type="evidence" value="ECO:0007669"/>
    <property type="project" value="UniProtKB-UniRule"/>
</dbReference>
<dbReference type="GO" id="GO:0000902">
    <property type="term" value="P:cell morphogenesis"/>
    <property type="evidence" value="ECO:0007669"/>
    <property type="project" value="UniProtKB-UniRule"/>
</dbReference>
<dbReference type="GO" id="GO:0071555">
    <property type="term" value="P:cell wall organization"/>
    <property type="evidence" value="ECO:0007669"/>
    <property type="project" value="UniProtKB-KW"/>
</dbReference>
<dbReference type="GO" id="GO:0009245">
    <property type="term" value="P:lipid A biosynthetic process"/>
    <property type="evidence" value="ECO:0007669"/>
    <property type="project" value="UniProtKB-UniRule"/>
</dbReference>
<dbReference type="GO" id="GO:0009252">
    <property type="term" value="P:peptidoglycan biosynthetic process"/>
    <property type="evidence" value="ECO:0007669"/>
    <property type="project" value="UniProtKB-UniRule"/>
</dbReference>
<dbReference type="GO" id="GO:0008360">
    <property type="term" value="P:regulation of cell shape"/>
    <property type="evidence" value="ECO:0007669"/>
    <property type="project" value="UniProtKB-KW"/>
</dbReference>
<dbReference type="GO" id="GO:0006048">
    <property type="term" value="P:UDP-N-acetylglucosamine biosynthetic process"/>
    <property type="evidence" value="ECO:0007669"/>
    <property type="project" value="UniProtKB-UniPathway"/>
</dbReference>
<dbReference type="CDD" id="cd02540">
    <property type="entry name" value="GT2_GlmU_N_bac"/>
    <property type="match status" value="1"/>
</dbReference>
<dbReference type="CDD" id="cd03353">
    <property type="entry name" value="LbH_GlmU_C"/>
    <property type="match status" value="1"/>
</dbReference>
<dbReference type="Gene3D" id="2.160.10.10">
    <property type="entry name" value="Hexapeptide repeat proteins"/>
    <property type="match status" value="1"/>
</dbReference>
<dbReference type="Gene3D" id="3.90.550.10">
    <property type="entry name" value="Spore Coat Polysaccharide Biosynthesis Protein SpsA, Chain A"/>
    <property type="match status" value="1"/>
</dbReference>
<dbReference type="HAMAP" id="MF_01631">
    <property type="entry name" value="GlmU"/>
    <property type="match status" value="1"/>
</dbReference>
<dbReference type="InterPro" id="IPR005882">
    <property type="entry name" value="Bifunctional_GlmU"/>
</dbReference>
<dbReference type="InterPro" id="IPR050065">
    <property type="entry name" value="GlmU-like"/>
</dbReference>
<dbReference type="InterPro" id="IPR038009">
    <property type="entry name" value="GlmU_C_LbH"/>
</dbReference>
<dbReference type="InterPro" id="IPR001451">
    <property type="entry name" value="Hexapep"/>
</dbReference>
<dbReference type="InterPro" id="IPR018357">
    <property type="entry name" value="Hexapep_transf_CS"/>
</dbReference>
<dbReference type="InterPro" id="IPR025877">
    <property type="entry name" value="MobA-like_NTP_Trfase"/>
</dbReference>
<dbReference type="InterPro" id="IPR029044">
    <property type="entry name" value="Nucleotide-diphossugar_trans"/>
</dbReference>
<dbReference type="InterPro" id="IPR011004">
    <property type="entry name" value="Trimer_LpxA-like_sf"/>
</dbReference>
<dbReference type="NCBIfam" id="TIGR01173">
    <property type="entry name" value="glmU"/>
    <property type="match status" value="1"/>
</dbReference>
<dbReference type="NCBIfam" id="NF010934">
    <property type="entry name" value="PRK14354.1"/>
    <property type="match status" value="1"/>
</dbReference>
<dbReference type="PANTHER" id="PTHR43584:SF3">
    <property type="entry name" value="BIFUNCTIONAL PROTEIN GLMU"/>
    <property type="match status" value="1"/>
</dbReference>
<dbReference type="PANTHER" id="PTHR43584">
    <property type="entry name" value="NUCLEOTIDYL TRANSFERASE"/>
    <property type="match status" value="1"/>
</dbReference>
<dbReference type="Pfam" id="PF00132">
    <property type="entry name" value="Hexapep"/>
    <property type="match status" value="3"/>
</dbReference>
<dbReference type="Pfam" id="PF12804">
    <property type="entry name" value="NTP_transf_3"/>
    <property type="match status" value="1"/>
</dbReference>
<dbReference type="SUPFAM" id="SSF53448">
    <property type="entry name" value="Nucleotide-diphospho-sugar transferases"/>
    <property type="match status" value="1"/>
</dbReference>
<dbReference type="SUPFAM" id="SSF51161">
    <property type="entry name" value="Trimeric LpxA-like enzymes"/>
    <property type="match status" value="1"/>
</dbReference>
<dbReference type="PROSITE" id="PS00101">
    <property type="entry name" value="HEXAPEP_TRANSFERASES"/>
    <property type="match status" value="1"/>
</dbReference>
<protein>
    <recommendedName>
        <fullName evidence="1">Bifunctional protein GlmU</fullName>
    </recommendedName>
    <domain>
        <recommendedName>
            <fullName evidence="1">UDP-N-acetylglucosamine pyrophosphorylase</fullName>
            <ecNumber evidence="1">2.7.7.23</ecNumber>
        </recommendedName>
        <alternativeName>
            <fullName evidence="1">N-acetylglucosamine-1-phosphate uridyltransferase</fullName>
        </alternativeName>
    </domain>
    <domain>
        <recommendedName>
            <fullName evidence="1">Glucosamine-1-phosphate N-acetyltransferase</fullName>
            <ecNumber evidence="1">2.3.1.157</ecNumber>
        </recommendedName>
    </domain>
</protein>
<sequence>MEGLVTLILAAGLGKRMKSKHPKVVHKVCGKPMIEWVVDAVEEIGSKEVIVVVGHKAEEVKEVLKERVKYAYQEVQLGTGHAVMMAEDLLPEEGNVLILTGDTPLITSNTLKELINFHIKEGNSVTILSSVLEDPTGYGRIIRDKSGNVIRIVEDKDATEEEKSIHEINSAMYVMDIAKLKKALRMITNNNAQGEYYLTDAVEIIRDMDGKIGAFTVPSEEITGVNSRVQLFEAEKIMRKRINYRHMENGVTIVDPDTTYIGAEVEIGADTVVLPGCVIEGKTKIGSDCEIGPNCRIVDSEIGDGCSVTYSVILSSKIKNNVKIGPFAHIRPETVIQSNVKIGDFVEIKKSIIDEGSKVPHLTYVGDAEVGKNVNMGCGSITVNYDGKQKHKTVIGDNVFVGCNVNLVAPVKIGNNAYIAAGSTITEDVPEGALAIARSRQTNKEGWVQERIKKGRL</sequence>
<organism>
    <name type="scientific">Thermoanaerobacter pseudethanolicus (strain ATCC 33223 / 39E)</name>
    <name type="common">Clostridium thermohydrosulfuricum</name>
    <dbReference type="NCBI Taxonomy" id="340099"/>
    <lineage>
        <taxon>Bacteria</taxon>
        <taxon>Bacillati</taxon>
        <taxon>Bacillota</taxon>
        <taxon>Clostridia</taxon>
        <taxon>Thermoanaerobacterales</taxon>
        <taxon>Thermoanaerobacteraceae</taxon>
        <taxon>Thermoanaerobacter</taxon>
    </lineage>
</organism>
<gene>
    <name evidence="1" type="primary">glmU</name>
    <name type="ordered locus">Teth39_0161</name>
</gene>
<evidence type="ECO:0000255" key="1">
    <source>
        <dbReference type="HAMAP-Rule" id="MF_01631"/>
    </source>
</evidence>
<comment type="function">
    <text evidence="1">Catalyzes the last two sequential reactions in the de novo biosynthetic pathway for UDP-N-acetylglucosamine (UDP-GlcNAc). The C-terminal domain catalyzes the transfer of acetyl group from acetyl coenzyme A to glucosamine-1-phosphate (GlcN-1-P) to produce N-acetylglucosamine-1-phosphate (GlcNAc-1-P), which is converted into UDP-GlcNAc by the transfer of uridine 5-monophosphate (from uridine 5-triphosphate), a reaction catalyzed by the N-terminal domain.</text>
</comment>
<comment type="catalytic activity">
    <reaction evidence="1">
        <text>alpha-D-glucosamine 1-phosphate + acetyl-CoA = N-acetyl-alpha-D-glucosamine 1-phosphate + CoA + H(+)</text>
        <dbReference type="Rhea" id="RHEA:13725"/>
        <dbReference type="ChEBI" id="CHEBI:15378"/>
        <dbReference type="ChEBI" id="CHEBI:57287"/>
        <dbReference type="ChEBI" id="CHEBI:57288"/>
        <dbReference type="ChEBI" id="CHEBI:57776"/>
        <dbReference type="ChEBI" id="CHEBI:58516"/>
        <dbReference type="EC" id="2.3.1.157"/>
    </reaction>
</comment>
<comment type="catalytic activity">
    <reaction evidence="1">
        <text>N-acetyl-alpha-D-glucosamine 1-phosphate + UTP + H(+) = UDP-N-acetyl-alpha-D-glucosamine + diphosphate</text>
        <dbReference type="Rhea" id="RHEA:13509"/>
        <dbReference type="ChEBI" id="CHEBI:15378"/>
        <dbReference type="ChEBI" id="CHEBI:33019"/>
        <dbReference type="ChEBI" id="CHEBI:46398"/>
        <dbReference type="ChEBI" id="CHEBI:57705"/>
        <dbReference type="ChEBI" id="CHEBI:57776"/>
        <dbReference type="EC" id="2.7.7.23"/>
    </reaction>
</comment>
<comment type="cofactor">
    <cofactor evidence="1">
        <name>Mg(2+)</name>
        <dbReference type="ChEBI" id="CHEBI:18420"/>
    </cofactor>
    <text evidence="1">Binds 1 Mg(2+) ion per subunit.</text>
</comment>
<comment type="pathway">
    <text evidence="1">Nucleotide-sugar biosynthesis; UDP-N-acetyl-alpha-D-glucosamine biosynthesis; N-acetyl-alpha-D-glucosamine 1-phosphate from alpha-D-glucosamine 6-phosphate (route II): step 2/2.</text>
</comment>
<comment type="pathway">
    <text evidence="1">Nucleotide-sugar biosynthesis; UDP-N-acetyl-alpha-D-glucosamine biosynthesis; UDP-N-acetyl-alpha-D-glucosamine from N-acetyl-alpha-D-glucosamine 1-phosphate: step 1/1.</text>
</comment>
<comment type="pathway">
    <text evidence="1">Bacterial outer membrane biogenesis; LPS lipid A biosynthesis.</text>
</comment>
<comment type="subunit">
    <text evidence="1">Homotrimer.</text>
</comment>
<comment type="subcellular location">
    <subcellularLocation>
        <location evidence="1">Cytoplasm</location>
    </subcellularLocation>
</comment>
<comment type="similarity">
    <text evidence="1">In the N-terminal section; belongs to the N-acetylglucosamine-1-phosphate uridyltransferase family.</text>
</comment>
<comment type="similarity">
    <text evidence="1">In the C-terminal section; belongs to the transferase hexapeptide repeat family.</text>
</comment>
<proteinExistence type="inferred from homology"/>
<name>GLMU_THEP3</name>